<gene>
    <name evidence="1" type="primary">prfA</name>
    <name type="ordered locus">Tfu_2419</name>
</gene>
<comment type="function">
    <text evidence="1">Peptide chain release factor 1 directs the termination of translation in response to the peptide chain termination codons UAG and UAA.</text>
</comment>
<comment type="subcellular location">
    <subcellularLocation>
        <location evidence="1">Cytoplasm</location>
    </subcellularLocation>
</comment>
<comment type="PTM">
    <text evidence="1">Methylated by PrmC. Methylation increases the termination efficiency of RF1.</text>
</comment>
<comment type="similarity">
    <text evidence="1">Belongs to the prokaryotic/mitochondrial release factor family.</text>
</comment>
<proteinExistence type="inferred from homology"/>
<feature type="chain" id="PRO_0000263381" description="Peptide chain release factor 1">
    <location>
        <begin position="1"/>
        <end position="355"/>
    </location>
</feature>
<feature type="modified residue" description="N5-methylglutamine" evidence="1">
    <location>
        <position position="232"/>
    </location>
</feature>
<dbReference type="EMBL" id="CP000088">
    <property type="protein sequence ID" value="AAZ56452.1"/>
    <property type="molecule type" value="Genomic_DNA"/>
</dbReference>
<dbReference type="RefSeq" id="WP_011292842.1">
    <property type="nucleotide sequence ID" value="NC_007333.1"/>
</dbReference>
<dbReference type="SMR" id="Q47M70"/>
<dbReference type="STRING" id="269800.Tfu_2419"/>
<dbReference type="KEGG" id="tfu:Tfu_2419"/>
<dbReference type="eggNOG" id="COG0216">
    <property type="taxonomic scope" value="Bacteria"/>
</dbReference>
<dbReference type="HOGENOM" id="CLU_036856_0_1_11"/>
<dbReference type="OrthoDB" id="9806673at2"/>
<dbReference type="GO" id="GO:0005737">
    <property type="term" value="C:cytoplasm"/>
    <property type="evidence" value="ECO:0007669"/>
    <property type="project" value="UniProtKB-SubCell"/>
</dbReference>
<dbReference type="GO" id="GO:0016149">
    <property type="term" value="F:translation release factor activity, codon specific"/>
    <property type="evidence" value="ECO:0007669"/>
    <property type="project" value="UniProtKB-UniRule"/>
</dbReference>
<dbReference type="FunFam" id="3.30.160.20:FF:000004">
    <property type="entry name" value="Peptide chain release factor 1"/>
    <property type="match status" value="1"/>
</dbReference>
<dbReference type="FunFam" id="3.30.70.1660:FF:000002">
    <property type="entry name" value="Peptide chain release factor 1"/>
    <property type="match status" value="1"/>
</dbReference>
<dbReference type="Gene3D" id="3.30.160.20">
    <property type="match status" value="1"/>
</dbReference>
<dbReference type="Gene3D" id="3.30.70.1660">
    <property type="match status" value="1"/>
</dbReference>
<dbReference type="Gene3D" id="6.10.140.1950">
    <property type="match status" value="1"/>
</dbReference>
<dbReference type="HAMAP" id="MF_00093">
    <property type="entry name" value="Rel_fac_1"/>
    <property type="match status" value="1"/>
</dbReference>
<dbReference type="InterPro" id="IPR005139">
    <property type="entry name" value="PCRF"/>
</dbReference>
<dbReference type="InterPro" id="IPR000352">
    <property type="entry name" value="Pep_chain_release_fac_I"/>
</dbReference>
<dbReference type="InterPro" id="IPR045853">
    <property type="entry name" value="Pep_chain_release_fac_I_sf"/>
</dbReference>
<dbReference type="InterPro" id="IPR050057">
    <property type="entry name" value="Prokaryotic/Mito_RF"/>
</dbReference>
<dbReference type="InterPro" id="IPR004373">
    <property type="entry name" value="RF-1"/>
</dbReference>
<dbReference type="NCBIfam" id="TIGR00019">
    <property type="entry name" value="prfA"/>
    <property type="match status" value="1"/>
</dbReference>
<dbReference type="NCBIfam" id="NF001859">
    <property type="entry name" value="PRK00591.1"/>
    <property type="match status" value="1"/>
</dbReference>
<dbReference type="PANTHER" id="PTHR43804">
    <property type="entry name" value="LD18447P"/>
    <property type="match status" value="1"/>
</dbReference>
<dbReference type="PANTHER" id="PTHR43804:SF7">
    <property type="entry name" value="LD18447P"/>
    <property type="match status" value="1"/>
</dbReference>
<dbReference type="Pfam" id="PF03462">
    <property type="entry name" value="PCRF"/>
    <property type="match status" value="1"/>
</dbReference>
<dbReference type="Pfam" id="PF00472">
    <property type="entry name" value="RF-1"/>
    <property type="match status" value="1"/>
</dbReference>
<dbReference type="SMART" id="SM00937">
    <property type="entry name" value="PCRF"/>
    <property type="match status" value="1"/>
</dbReference>
<dbReference type="SUPFAM" id="SSF75620">
    <property type="entry name" value="Release factor"/>
    <property type="match status" value="1"/>
</dbReference>
<dbReference type="PROSITE" id="PS00745">
    <property type="entry name" value="RF_PROK_I"/>
    <property type="match status" value="1"/>
</dbReference>
<organism>
    <name type="scientific">Thermobifida fusca (strain YX)</name>
    <dbReference type="NCBI Taxonomy" id="269800"/>
    <lineage>
        <taxon>Bacteria</taxon>
        <taxon>Bacillati</taxon>
        <taxon>Actinomycetota</taxon>
        <taxon>Actinomycetes</taxon>
        <taxon>Streptosporangiales</taxon>
        <taxon>Nocardiopsidaceae</taxon>
        <taxon>Thermobifida</taxon>
    </lineage>
</organism>
<name>RF1_THEFY</name>
<keyword id="KW-0963">Cytoplasm</keyword>
<keyword id="KW-0488">Methylation</keyword>
<keyword id="KW-0648">Protein biosynthesis</keyword>
<protein>
    <recommendedName>
        <fullName evidence="1">Peptide chain release factor 1</fullName>
        <shortName evidence="1">RF-1</shortName>
    </recommendedName>
</protein>
<accession>Q47M70</accession>
<evidence type="ECO:0000255" key="1">
    <source>
        <dbReference type="HAMAP-Rule" id="MF_00093"/>
    </source>
</evidence>
<sequence>MKLDDLLGEYYELEQQLADPAVHADQAQARTLAKRYSQLTPIVATYRELNRVESDIETAQELAAEDPSFADEAKQLAAQREELVQRLRTLLIPRDPNDDKDVILEVKAGEGGEESALFASDLVRMYLRYAERQGWKTEIISATHSDLGGYKDITIAIKNRGTVEPGQGVWHRLKFEGGVHRVQRVPVTESQGRIHTSAVGVLVLPEAEEIEVEINESDLRIDVYRSSGPGGQSVNTTDSAVRITHLPTGIVVSCQNEKSQLQNKEQALRVLRARLLAEAQAAAEAEAAAERRSQVRTVDRSERVRTYNFPENRISDHRVGYKAYNLDQVLDGELDGVIQALVDADTKERLEAAQQ</sequence>
<reference key="1">
    <citation type="journal article" date="2007" name="J. Bacteriol.">
        <title>Genome sequence and analysis of the soil cellulolytic actinomycete Thermobifida fusca YX.</title>
        <authorList>
            <person name="Lykidis A."/>
            <person name="Mavromatis K."/>
            <person name="Ivanova N."/>
            <person name="Anderson I."/>
            <person name="Land M."/>
            <person name="DiBartolo G."/>
            <person name="Martinez M."/>
            <person name="Lapidus A."/>
            <person name="Lucas S."/>
            <person name="Copeland A."/>
            <person name="Richardson P."/>
            <person name="Wilson D.B."/>
            <person name="Kyrpides N."/>
        </authorList>
    </citation>
    <scope>NUCLEOTIDE SEQUENCE [LARGE SCALE GENOMIC DNA]</scope>
    <source>
        <strain>YX</strain>
    </source>
</reference>